<protein>
    <recommendedName>
        <fullName evidence="6">KappaPI-actitoxin-Ael3a</fullName>
        <shortName evidence="6">KappaPI-AITX-Ael3a</shortName>
    </recommendedName>
    <alternativeName>
        <fullName evidence="5">Kunitz-type serine protease inhibitor APEKTx1</fullName>
    </alternativeName>
</protein>
<sequence length="65" mass="7475">INSICLLPKKQGFCRARFPRFYYNSSTRRCEMFYYGGCGGNANNFNTLEECEKVCLGYGEAWKAP</sequence>
<accession>P86862</accession>
<name>VKT1_ANTEL</name>
<keyword id="KW-0903">Direct protein sequencing</keyword>
<keyword id="KW-1015">Disulfide bond</keyword>
<keyword id="KW-0872">Ion channel impairing toxin</keyword>
<keyword id="KW-0166">Nematocyst</keyword>
<keyword id="KW-0632">Potassium channel impairing toxin</keyword>
<keyword id="KW-0646">Protease inhibitor</keyword>
<keyword id="KW-0964">Secreted</keyword>
<keyword id="KW-0722">Serine protease inhibitor</keyword>
<keyword id="KW-0800">Toxin</keyword>
<keyword id="KW-1220">Voltage-gated potassium channel impairing toxin</keyword>
<dbReference type="SMR" id="P86862"/>
<dbReference type="GO" id="GO:0005615">
    <property type="term" value="C:extracellular space"/>
    <property type="evidence" value="ECO:0007669"/>
    <property type="project" value="TreeGrafter"/>
</dbReference>
<dbReference type="GO" id="GO:0042151">
    <property type="term" value="C:nematocyst"/>
    <property type="evidence" value="ECO:0007669"/>
    <property type="project" value="UniProtKB-SubCell"/>
</dbReference>
<dbReference type="GO" id="GO:0019870">
    <property type="term" value="F:potassium channel inhibitor activity"/>
    <property type="evidence" value="ECO:0000314"/>
    <property type="project" value="UniProtKB"/>
</dbReference>
<dbReference type="GO" id="GO:0004867">
    <property type="term" value="F:serine-type endopeptidase inhibitor activity"/>
    <property type="evidence" value="ECO:0000314"/>
    <property type="project" value="UniProtKB"/>
</dbReference>
<dbReference type="GO" id="GO:0090729">
    <property type="term" value="F:toxin activity"/>
    <property type="evidence" value="ECO:0007669"/>
    <property type="project" value="UniProtKB-KW"/>
</dbReference>
<dbReference type="CDD" id="cd22633">
    <property type="entry name" value="Kunitz_actitoxin-like"/>
    <property type="match status" value="1"/>
</dbReference>
<dbReference type="FunFam" id="4.10.410.10:FF:000021">
    <property type="entry name" value="Serine protease inhibitor, putative"/>
    <property type="match status" value="1"/>
</dbReference>
<dbReference type="Gene3D" id="4.10.410.10">
    <property type="entry name" value="Pancreatic trypsin inhibitor Kunitz domain"/>
    <property type="match status" value="1"/>
</dbReference>
<dbReference type="InterPro" id="IPR002223">
    <property type="entry name" value="Kunitz_BPTI"/>
</dbReference>
<dbReference type="InterPro" id="IPR036880">
    <property type="entry name" value="Kunitz_BPTI_sf"/>
</dbReference>
<dbReference type="InterPro" id="IPR020901">
    <property type="entry name" value="Prtase_inh_Kunz-CS"/>
</dbReference>
<dbReference type="InterPro" id="IPR050098">
    <property type="entry name" value="TFPI/VKTCI-like"/>
</dbReference>
<dbReference type="PANTHER" id="PTHR10083">
    <property type="entry name" value="KUNITZ-TYPE PROTEASE INHIBITOR-RELATED"/>
    <property type="match status" value="1"/>
</dbReference>
<dbReference type="PANTHER" id="PTHR10083:SF376">
    <property type="entry name" value="SERINE PEPTIDASE INHIBITOR, KUNITZ TYPE, 3"/>
    <property type="match status" value="1"/>
</dbReference>
<dbReference type="Pfam" id="PF00014">
    <property type="entry name" value="Kunitz_BPTI"/>
    <property type="match status" value="1"/>
</dbReference>
<dbReference type="PRINTS" id="PR00759">
    <property type="entry name" value="BASICPTASE"/>
</dbReference>
<dbReference type="SMART" id="SM00131">
    <property type="entry name" value="KU"/>
    <property type="match status" value="1"/>
</dbReference>
<dbReference type="SUPFAM" id="SSF57362">
    <property type="entry name" value="BPTI-like"/>
    <property type="match status" value="1"/>
</dbReference>
<dbReference type="PROSITE" id="PS00280">
    <property type="entry name" value="BPTI_KUNITZ_1"/>
    <property type="match status" value="1"/>
</dbReference>
<dbReference type="PROSITE" id="PS50279">
    <property type="entry name" value="BPTI_KUNITZ_2"/>
    <property type="match status" value="1"/>
</dbReference>
<comment type="function">
    <text evidence="4">Dual-function toxin that inhibits both serine proteases (trypsin Kd=124 nM) and voltage-gated potassium channels rKv1.1/KCNA1 (IC(50)=0.9 nM). The activity on the Kv1.1/KCNA1 is selective and reversible. The toxin presumably acts by blocking the channel pore in the open state.</text>
</comment>
<comment type="subcellular location">
    <subcellularLocation>
        <location evidence="8">Secreted</location>
    </subcellularLocation>
    <subcellularLocation>
        <location evidence="7">Nematocyst</location>
    </subcellularLocation>
</comment>
<comment type="mass spectrometry" mass="7468.8" method="MALDI" evidence="4"/>
<comment type="mass spectrometry" mass="7484.8" method="Electrospray" evidence="4"/>
<comment type="miscellaneous">
    <text evidence="4">Negative results: does not inhibit voltage-gated potassium channels Kv1.2/KCNA2, Kv1.3/KCNA3, Kv1.4/KCNA4, Kv1.5/KCNA5, Kv1.6/KCNA6, Kv2.1/KCNB1, Kv3.1/KCNC1, Kv4.2/KCND2, Kv4.3/KCND3, hERG, Shaker, HCN1, HCN2 and voltage-gated sodium channels Nav1.2/SCN2A, Nav1.3/SCN3A, Nav1.4/SCN4A, Nav1.5/SCN5A, Nav1.6/SCN8A, Nav1.7/SCN9A, Nav1.8/SCN10A and the insect channel DmNav1.</text>
</comment>
<comment type="similarity">
    <text evidence="7">Belongs to the venom Kunitz-type family. Sea anemone type 2 potassium channel toxin subfamily.</text>
</comment>
<feature type="chain" id="PRO_0000409666" description="KappaPI-actitoxin-Ael3a" evidence="4">
    <location>
        <begin position="1"/>
        <end position="65"/>
    </location>
</feature>
<feature type="domain" description="BPTI/Kunitz inhibitor" evidence="3">
    <location>
        <begin position="5"/>
        <end position="55"/>
    </location>
</feature>
<feature type="site" description="Reactive bond" evidence="2">
    <location>
        <begin position="15"/>
        <end position="16"/>
    </location>
</feature>
<feature type="disulfide bond" evidence="1 3">
    <location>
        <begin position="5"/>
        <end position="55"/>
    </location>
</feature>
<feature type="disulfide bond" evidence="1 3">
    <location>
        <begin position="14"/>
        <end position="38"/>
    </location>
</feature>
<feature type="disulfide bond" evidence="1 3">
    <location>
        <begin position="30"/>
        <end position="51"/>
    </location>
</feature>
<proteinExistence type="evidence at protein level"/>
<organism>
    <name type="scientific">Anthopleura elegantissima</name>
    <name type="common">Green aggregating anemone</name>
    <name type="synonym">Actinia elegantissima</name>
    <dbReference type="NCBI Taxonomy" id="6110"/>
    <lineage>
        <taxon>Eukaryota</taxon>
        <taxon>Metazoa</taxon>
        <taxon>Cnidaria</taxon>
        <taxon>Anthozoa</taxon>
        <taxon>Hexacorallia</taxon>
        <taxon>Actiniaria</taxon>
        <taxon>Actiniidae</taxon>
        <taxon>Anthopleura</taxon>
    </lineage>
</organism>
<reference key="1">
    <citation type="journal article" date="2011" name="Biochem. Pharmacol.">
        <title>A bifunctional sea anemone peptide with Kunitz type protease and potassium channel inhibiting properties.</title>
        <authorList>
            <person name="Peigneur S."/>
            <person name="Billen B."/>
            <person name="Derua R."/>
            <person name="Waelkens E."/>
            <person name="Debaveye S."/>
            <person name="Beress L."/>
            <person name="Tytgat J."/>
        </authorList>
    </citation>
    <scope>PROTEIN SEQUENCE</scope>
    <scope>FUNCTION</scope>
    <scope>MASS SPECTROMETRY</scope>
    <scope>3D-STRUCTURE MODELING</scope>
</reference>
<reference key="2">
    <citation type="journal article" date="2012" name="Toxicon">
        <title>Development of a rational nomenclature for naming peptide and protein toxins from sea anemones.</title>
        <authorList>
            <person name="Oliveira J.S."/>
            <person name="Fuentes-Silva D."/>
            <person name="King G.F."/>
        </authorList>
    </citation>
    <scope>NOMENCLATURE</scope>
</reference>
<evidence type="ECO:0000250" key="1">
    <source>
        <dbReference type="UniProtKB" id="P00974"/>
    </source>
</evidence>
<evidence type="ECO:0000250" key="2">
    <source>
        <dbReference type="UniProtKB" id="P31713"/>
    </source>
</evidence>
<evidence type="ECO:0000255" key="3">
    <source>
        <dbReference type="PROSITE-ProRule" id="PRU00031"/>
    </source>
</evidence>
<evidence type="ECO:0000269" key="4">
    <source>
    </source>
</evidence>
<evidence type="ECO:0000303" key="5">
    <source>
    </source>
</evidence>
<evidence type="ECO:0000303" key="6">
    <source>
    </source>
</evidence>
<evidence type="ECO:0000305" key="7"/>
<evidence type="ECO:0000305" key="8">
    <source>
    </source>
</evidence>